<name>HMGL_WHEAT</name>
<comment type="subcellular location">
    <subcellularLocation>
        <location evidence="1">Nucleus</location>
    </subcellularLocation>
</comment>
<comment type="similarity">
    <text evidence="3">Belongs to the HMGB family.</text>
</comment>
<sequence length="161" mass="17214">MKGAKSKGAAKADAKLAVKSKGAEKPAAKGKKGKAGKDPNKPKRAPSAFFVFMGEFREEFKQKNPKNKSVAAVGKAAGERWKSLSESEKAPYVAKANKLKGEYNKAIAAYNKGESAAAAAPKKAAAKEVEEEDEEESDKSKSEINDDDDDEGSDEDEDDDE</sequence>
<organism>
    <name type="scientific">Triticum aestivum</name>
    <name type="common">Wheat</name>
    <dbReference type="NCBI Taxonomy" id="4565"/>
    <lineage>
        <taxon>Eukaryota</taxon>
        <taxon>Viridiplantae</taxon>
        <taxon>Streptophyta</taxon>
        <taxon>Embryophyta</taxon>
        <taxon>Tracheophyta</taxon>
        <taxon>Spermatophyta</taxon>
        <taxon>Magnoliopsida</taxon>
        <taxon>Liliopsida</taxon>
        <taxon>Poales</taxon>
        <taxon>Poaceae</taxon>
        <taxon>BOP clade</taxon>
        <taxon>Pooideae</taxon>
        <taxon>Triticodae</taxon>
        <taxon>Triticeae</taxon>
        <taxon>Triticinae</taxon>
        <taxon>Triticum</taxon>
    </lineage>
</organism>
<dbReference type="EMBL" id="Z11540">
    <property type="protein sequence ID" value="CAA77641.1"/>
    <property type="molecule type" value="mRNA"/>
</dbReference>
<dbReference type="PIR" id="S18991">
    <property type="entry name" value="S18991"/>
</dbReference>
<dbReference type="RefSeq" id="NP_001392717.1">
    <property type="nucleotide sequence ID" value="NM_001405788.1"/>
</dbReference>
<dbReference type="SMR" id="P40621"/>
<dbReference type="STRING" id="4565.P40621"/>
<dbReference type="PaxDb" id="4565-Traes_7DL_0CEFCB39D.1"/>
<dbReference type="EnsemblPlants" id="TraesARI7A03G04007580.1">
    <property type="protein sequence ID" value="TraesARI7A03G04007580.1"/>
    <property type="gene ID" value="TraesARI7A03G04007580"/>
</dbReference>
<dbReference type="EnsemblPlants" id="TraesARI7A03G04007580.2">
    <property type="protein sequence ID" value="TraesARI7A03G04007580.2"/>
    <property type="gene ID" value="TraesARI7A03G04007580"/>
</dbReference>
<dbReference type="EnsemblPlants" id="TraesCAD_scaffold_049055_01G000100.1">
    <property type="protein sequence ID" value="TraesCAD_scaffold_049055_01G000100.1"/>
    <property type="gene ID" value="TraesCAD_scaffold_049055_01G000100"/>
</dbReference>
<dbReference type="EnsemblPlants" id="TraesCLE_scaffold_071550_01G000100.1">
    <property type="protein sequence ID" value="TraesCLE_scaffold_071550_01G000100.1"/>
    <property type="gene ID" value="TraesCLE_scaffold_071550_01G000100"/>
</dbReference>
<dbReference type="EnsemblPlants" id="TraesCS7A02G552400.1">
    <property type="protein sequence ID" value="TraesCS7A02G552400.1"/>
    <property type="gene ID" value="TraesCS7A02G552400"/>
</dbReference>
<dbReference type="EnsemblPlants" id="TraesCS7A03G1342600.1">
    <property type="protein sequence ID" value="TraesCS7A03G1342600.1.CDS"/>
    <property type="gene ID" value="TraesCS7A03G1342600"/>
</dbReference>
<dbReference type="EnsemblPlants" id="TraesJAG7A03G04014970.1">
    <property type="protein sequence ID" value="TraesJAG7A03G04014970.1"/>
    <property type="gene ID" value="TraesJAG7A03G04014970"/>
</dbReference>
<dbReference type="EnsemblPlants" id="TraesJUL7A03G04070130.1">
    <property type="protein sequence ID" value="TraesJUL7A03G04070130.1"/>
    <property type="gene ID" value="TraesJUL7A03G04070130"/>
</dbReference>
<dbReference type="EnsemblPlants" id="TraesKAR7A01G0467570.1">
    <property type="protein sequence ID" value="cds.TraesKAR7A01G0467570.1"/>
    <property type="gene ID" value="TraesKAR7A01G0467570"/>
</dbReference>
<dbReference type="EnsemblPlants" id="TraesLAC7A03G03984720.1">
    <property type="protein sequence ID" value="TraesLAC7A03G03984720.1"/>
    <property type="gene ID" value="TraesLAC7A03G03984720"/>
</dbReference>
<dbReference type="EnsemblPlants" id="TraesLDM7A03G04036370.1">
    <property type="protein sequence ID" value="TraesLDM7A03G04036370.1"/>
    <property type="gene ID" value="TraesLDM7A03G04036370"/>
</dbReference>
<dbReference type="EnsemblPlants" id="TraesLDM7A03G04036370.2">
    <property type="protein sequence ID" value="TraesLDM7A03G04036370.2"/>
    <property type="gene ID" value="TraesLDM7A03G04036370"/>
</dbReference>
<dbReference type="EnsemblPlants" id="TraesMAC7A03G04029940.1">
    <property type="protein sequence ID" value="TraesMAC7A03G04029940.1"/>
    <property type="gene ID" value="TraesMAC7A03G04029940"/>
</dbReference>
<dbReference type="EnsemblPlants" id="TraesNOR7A03G04076440.1">
    <property type="protein sequence ID" value="TraesNOR7A03G04076440.1"/>
    <property type="gene ID" value="TraesNOR7A03G04076440"/>
</dbReference>
<dbReference type="EnsemblPlants" id="TraesRN7A0101338400.2">
    <property type="protein sequence ID" value="TraesRN7A0101338400.2"/>
    <property type="gene ID" value="TraesRN7A0101338400"/>
</dbReference>
<dbReference type="EnsemblPlants" id="TraesSTA7A03G04028000.1">
    <property type="protein sequence ID" value="TraesSTA7A03G04028000.1"/>
    <property type="gene ID" value="TraesSTA7A03G04028000"/>
</dbReference>
<dbReference type="EnsemblPlants" id="TraesSYM7A03G03986860.1">
    <property type="protein sequence ID" value="TraesSYM7A03G03986860.1"/>
    <property type="gene ID" value="TraesSYM7A03G03986860"/>
</dbReference>
<dbReference type="EnsemblPlants" id="TraesSYM7A03G03986860.2">
    <property type="protein sequence ID" value="TraesSYM7A03G03986860.2"/>
    <property type="gene ID" value="TraesSYM7A03G03986860"/>
</dbReference>
<dbReference type="EnsemblPlants" id="TraesWEE_scaffold_069609_01G000300.1">
    <property type="protein sequence ID" value="TraesWEE_scaffold_069609_01G000300.1"/>
    <property type="gene ID" value="TraesWEE_scaffold_069609_01G000300"/>
</dbReference>
<dbReference type="GeneID" id="543333"/>
<dbReference type="Gramene" id="TraesARI7A03G04007580.1">
    <property type="protein sequence ID" value="TraesARI7A03G04007580.1"/>
    <property type="gene ID" value="TraesARI7A03G04007580"/>
</dbReference>
<dbReference type="Gramene" id="TraesARI7A03G04007580.2">
    <property type="protein sequence ID" value="TraesARI7A03G04007580.2"/>
    <property type="gene ID" value="TraesARI7A03G04007580"/>
</dbReference>
<dbReference type="Gramene" id="TraesCAD_scaffold_049055_01G000100.1">
    <property type="protein sequence ID" value="TraesCAD_scaffold_049055_01G000100.1"/>
    <property type="gene ID" value="TraesCAD_scaffold_049055_01G000100"/>
</dbReference>
<dbReference type="Gramene" id="TraesCLE_scaffold_071550_01G000100.1">
    <property type="protein sequence ID" value="TraesCLE_scaffold_071550_01G000100.1"/>
    <property type="gene ID" value="TraesCLE_scaffold_071550_01G000100"/>
</dbReference>
<dbReference type="Gramene" id="TraesCS7A02G552400.1">
    <property type="protein sequence ID" value="TraesCS7A02G552400.1"/>
    <property type="gene ID" value="TraesCS7A02G552400"/>
</dbReference>
<dbReference type="Gramene" id="TraesCS7A03G1342600.1">
    <property type="protein sequence ID" value="TraesCS7A03G1342600.1.CDS"/>
    <property type="gene ID" value="TraesCS7A03G1342600"/>
</dbReference>
<dbReference type="Gramene" id="TraesJAG7A03G04014970.1">
    <property type="protein sequence ID" value="TraesJAG7A03G04014970.1"/>
    <property type="gene ID" value="TraesJAG7A03G04014970"/>
</dbReference>
<dbReference type="Gramene" id="TraesJUL7A03G04070130.1">
    <property type="protein sequence ID" value="TraesJUL7A03G04070130.1"/>
    <property type="gene ID" value="TraesJUL7A03G04070130"/>
</dbReference>
<dbReference type="Gramene" id="TraesKAR7A01G0467570.1">
    <property type="protein sequence ID" value="cds.TraesKAR7A01G0467570.1"/>
    <property type="gene ID" value="TraesKAR7A01G0467570"/>
</dbReference>
<dbReference type="Gramene" id="TraesLAC7A03G03984720.1">
    <property type="protein sequence ID" value="TraesLAC7A03G03984720.1"/>
    <property type="gene ID" value="TraesLAC7A03G03984720"/>
</dbReference>
<dbReference type="Gramene" id="TraesLDM7A03G04036370.1">
    <property type="protein sequence ID" value="TraesLDM7A03G04036370.1"/>
    <property type="gene ID" value="TraesLDM7A03G04036370"/>
</dbReference>
<dbReference type="Gramene" id="TraesLDM7A03G04036370.2">
    <property type="protein sequence ID" value="TraesLDM7A03G04036370.2"/>
    <property type="gene ID" value="TraesLDM7A03G04036370"/>
</dbReference>
<dbReference type="Gramene" id="TraesMAC7A03G04029940.1">
    <property type="protein sequence ID" value="TraesMAC7A03G04029940.1"/>
    <property type="gene ID" value="TraesMAC7A03G04029940"/>
</dbReference>
<dbReference type="Gramene" id="TraesNOR7A03G04076440.1">
    <property type="protein sequence ID" value="TraesNOR7A03G04076440.1"/>
    <property type="gene ID" value="TraesNOR7A03G04076440"/>
</dbReference>
<dbReference type="Gramene" id="TraesRN7A0101338400.2">
    <property type="protein sequence ID" value="TraesRN7A0101338400.2"/>
    <property type="gene ID" value="TraesRN7A0101338400"/>
</dbReference>
<dbReference type="Gramene" id="TraesSTA7A03G04028000.1">
    <property type="protein sequence ID" value="TraesSTA7A03G04028000.1"/>
    <property type="gene ID" value="TraesSTA7A03G04028000"/>
</dbReference>
<dbReference type="Gramene" id="TraesSYM7A03G03986860.1">
    <property type="protein sequence ID" value="TraesSYM7A03G03986860.1"/>
    <property type="gene ID" value="TraesSYM7A03G03986860"/>
</dbReference>
<dbReference type="Gramene" id="TraesSYM7A03G03986860.2">
    <property type="protein sequence ID" value="TraesSYM7A03G03986860.2"/>
    <property type="gene ID" value="TraesSYM7A03G03986860"/>
</dbReference>
<dbReference type="Gramene" id="TraesWEE_scaffold_069609_01G000300.1">
    <property type="protein sequence ID" value="TraesWEE_scaffold_069609_01G000300.1"/>
    <property type="gene ID" value="TraesWEE_scaffold_069609_01G000300"/>
</dbReference>
<dbReference type="eggNOG" id="KOG0381">
    <property type="taxonomic scope" value="Eukaryota"/>
</dbReference>
<dbReference type="OMA" id="PLSAYMH"/>
<dbReference type="OrthoDB" id="1919336at2759"/>
<dbReference type="Proteomes" id="UP000019116">
    <property type="component" value="Chromosome 7A"/>
</dbReference>
<dbReference type="ExpressionAtlas" id="P40621">
    <property type="expression patterns" value="baseline and differential"/>
</dbReference>
<dbReference type="GO" id="GO:0005634">
    <property type="term" value="C:nucleus"/>
    <property type="evidence" value="ECO:0007669"/>
    <property type="project" value="UniProtKB-SubCell"/>
</dbReference>
<dbReference type="GO" id="GO:0003677">
    <property type="term" value="F:DNA binding"/>
    <property type="evidence" value="ECO:0007669"/>
    <property type="project" value="UniProtKB-KW"/>
</dbReference>
<dbReference type="CDD" id="cd22005">
    <property type="entry name" value="HMG-box_AtHMGB1-like"/>
    <property type="match status" value="1"/>
</dbReference>
<dbReference type="FunFam" id="1.10.30.10:FF:000044">
    <property type="entry name" value="High mobility group B1"/>
    <property type="match status" value="1"/>
</dbReference>
<dbReference type="Gene3D" id="1.10.30.10">
    <property type="entry name" value="High mobility group box domain"/>
    <property type="match status" value="1"/>
</dbReference>
<dbReference type="InterPro" id="IPR009071">
    <property type="entry name" value="HMG_box_dom"/>
</dbReference>
<dbReference type="InterPro" id="IPR036910">
    <property type="entry name" value="HMG_box_dom_sf"/>
</dbReference>
<dbReference type="InterPro" id="IPR031061">
    <property type="entry name" value="HMGB_plant"/>
</dbReference>
<dbReference type="PANTHER" id="PTHR46261:SF18">
    <property type="entry name" value="DNA-BINDING PROTEIN MNB1B"/>
    <property type="match status" value="1"/>
</dbReference>
<dbReference type="PANTHER" id="PTHR46261">
    <property type="entry name" value="HIGH MOBILITY GROUP B PROTEIN 4-RELATED"/>
    <property type="match status" value="1"/>
</dbReference>
<dbReference type="Pfam" id="PF00505">
    <property type="entry name" value="HMG_box"/>
    <property type="match status" value="1"/>
</dbReference>
<dbReference type="SMART" id="SM00398">
    <property type="entry name" value="HMG"/>
    <property type="match status" value="1"/>
</dbReference>
<dbReference type="SUPFAM" id="SSF47095">
    <property type="entry name" value="HMG-box"/>
    <property type="match status" value="1"/>
</dbReference>
<dbReference type="PROSITE" id="PS50118">
    <property type="entry name" value="HMG_BOX_2"/>
    <property type="match status" value="1"/>
</dbReference>
<evidence type="ECO:0000255" key="1">
    <source>
        <dbReference type="PROSITE-ProRule" id="PRU00267"/>
    </source>
</evidence>
<evidence type="ECO:0000256" key="2">
    <source>
        <dbReference type="SAM" id="MobiDB-lite"/>
    </source>
</evidence>
<evidence type="ECO:0000305" key="3"/>
<accession>P40621</accession>
<proteinExistence type="evidence at transcript level"/>
<feature type="chain" id="PRO_0000048557" description="HMG1/2-like protein">
    <location>
        <begin position="1"/>
        <end position="161"/>
    </location>
</feature>
<feature type="DNA-binding region" description="HMG box" evidence="1">
    <location>
        <begin position="42"/>
        <end position="111"/>
    </location>
</feature>
<feature type="region of interest" description="Disordered" evidence="2">
    <location>
        <begin position="1"/>
        <end position="46"/>
    </location>
</feature>
<feature type="region of interest" description="Disordered" evidence="2">
    <location>
        <begin position="60"/>
        <end position="91"/>
    </location>
</feature>
<feature type="region of interest" description="Disordered" evidence="2">
    <location>
        <begin position="113"/>
        <end position="161"/>
    </location>
</feature>
<feature type="compositionally biased region" description="Basic and acidic residues" evidence="2">
    <location>
        <begin position="10"/>
        <end position="27"/>
    </location>
</feature>
<feature type="compositionally biased region" description="Basic and acidic residues" evidence="2">
    <location>
        <begin position="77"/>
        <end position="89"/>
    </location>
</feature>
<feature type="compositionally biased region" description="Low complexity" evidence="2">
    <location>
        <begin position="114"/>
        <end position="123"/>
    </location>
</feature>
<feature type="compositionally biased region" description="Acidic residues" evidence="2">
    <location>
        <begin position="145"/>
        <end position="161"/>
    </location>
</feature>
<keyword id="KW-0238">DNA-binding</keyword>
<keyword id="KW-0539">Nucleus</keyword>
<keyword id="KW-1185">Reference proteome</keyword>
<reference key="1">
    <citation type="submission" date="1991-11" db="EMBL/GenBank/DDBJ databases">
        <authorList>
            <person name="de Froidmont D."/>
        </authorList>
    </citation>
    <scope>NUCLEOTIDE SEQUENCE [MRNA]</scope>
    <source>
        <strain>cv. Odeon</strain>
        <tissue>Endosperm</tissue>
    </source>
</reference>
<protein>
    <recommendedName>
        <fullName>HMG1/2-like protein</fullName>
    </recommendedName>
</protein>